<protein>
    <recommendedName>
        <fullName evidence="2">Small ribosomal subunit protein uS19</fullName>
    </recommendedName>
    <alternativeName>
        <fullName>40S ribosomal protein S15</fullName>
    </alternativeName>
</protein>
<name>RS15_BOVIN</name>
<proteinExistence type="evidence at transcript level"/>
<keyword id="KW-0007">Acetylation</keyword>
<keyword id="KW-0963">Cytoplasm</keyword>
<keyword id="KW-1017">Isopeptide bond</keyword>
<keyword id="KW-1185">Reference proteome</keyword>
<keyword id="KW-0687">Ribonucleoprotein</keyword>
<keyword id="KW-0689">Ribosomal protein</keyword>
<keyword id="KW-0832">Ubl conjugation</keyword>
<dbReference type="EMBL" id="AY911317">
    <property type="protein sequence ID" value="AAW82085.1"/>
    <property type="molecule type" value="mRNA"/>
</dbReference>
<dbReference type="EMBL" id="BC102068">
    <property type="protein sequence ID" value="AAI02069.1"/>
    <property type="molecule type" value="mRNA"/>
</dbReference>
<dbReference type="RefSeq" id="NP_001019712.1">
    <property type="nucleotide sequence ID" value="NM_001024541.2"/>
</dbReference>
<dbReference type="SMR" id="Q56K10"/>
<dbReference type="FunCoup" id="Q56K10">
    <property type="interactions" value="2268"/>
</dbReference>
<dbReference type="STRING" id="9913.ENSBTAP00000026278"/>
<dbReference type="PaxDb" id="9913-ENSBTAP00000026278"/>
<dbReference type="PeptideAtlas" id="Q56K10"/>
<dbReference type="Ensembl" id="ENSBTAT00000026278.5">
    <property type="protein sequence ID" value="ENSBTAP00000026278.3"/>
    <property type="gene ID" value="ENSBTAG00000019718.5"/>
</dbReference>
<dbReference type="GeneID" id="514569"/>
<dbReference type="KEGG" id="bta:514569"/>
<dbReference type="CTD" id="6209"/>
<dbReference type="VEuPathDB" id="HostDB:ENSBTAG00000019718"/>
<dbReference type="VGNC" id="VGNC:34131">
    <property type="gene designation" value="RPS15"/>
</dbReference>
<dbReference type="eggNOG" id="KOG0898">
    <property type="taxonomic scope" value="Eukaryota"/>
</dbReference>
<dbReference type="GeneTree" id="ENSGT00390000000475"/>
<dbReference type="HOGENOM" id="CLU_097347_1_0_1"/>
<dbReference type="InParanoid" id="Q56K10"/>
<dbReference type="OMA" id="KTHCRDM"/>
<dbReference type="OrthoDB" id="10258210at2759"/>
<dbReference type="TreeFam" id="TF318650"/>
<dbReference type="Reactome" id="R-BTA-156827">
    <property type="pathway name" value="L13a-mediated translational silencing of Ceruloplasmin expression"/>
</dbReference>
<dbReference type="Reactome" id="R-BTA-1799339">
    <property type="pathway name" value="SRP-dependent cotranslational protein targeting to membrane"/>
</dbReference>
<dbReference type="Reactome" id="R-BTA-6791226">
    <property type="pathway name" value="Major pathway of rRNA processing in the nucleolus and cytosol"/>
</dbReference>
<dbReference type="Reactome" id="R-BTA-72649">
    <property type="pathway name" value="Translation initiation complex formation"/>
</dbReference>
<dbReference type="Reactome" id="R-BTA-72689">
    <property type="pathway name" value="Formation of a pool of free 40S subunits"/>
</dbReference>
<dbReference type="Reactome" id="R-BTA-72695">
    <property type="pathway name" value="Formation of the ternary complex, and subsequently, the 43S complex"/>
</dbReference>
<dbReference type="Reactome" id="R-BTA-72702">
    <property type="pathway name" value="Ribosomal scanning and start codon recognition"/>
</dbReference>
<dbReference type="Reactome" id="R-BTA-72706">
    <property type="pathway name" value="GTP hydrolysis and joining of the 60S ribosomal subunit"/>
</dbReference>
<dbReference type="Reactome" id="R-BTA-975956">
    <property type="pathway name" value="Nonsense Mediated Decay (NMD) independent of the Exon Junction Complex (EJC)"/>
</dbReference>
<dbReference type="Reactome" id="R-BTA-975957">
    <property type="pathway name" value="Nonsense Mediated Decay (NMD) enhanced by the Exon Junction Complex (EJC)"/>
</dbReference>
<dbReference type="Proteomes" id="UP000009136">
    <property type="component" value="Chromosome 7"/>
</dbReference>
<dbReference type="Bgee" id="ENSBTAG00000019718">
    <property type="expression patterns" value="Expressed in nasopharynx and 114 other cell types or tissues"/>
</dbReference>
<dbReference type="GO" id="GO:0022627">
    <property type="term" value="C:cytosolic small ribosomal subunit"/>
    <property type="evidence" value="ECO:0000250"/>
    <property type="project" value="AgBase"/>
</dbReference>
<dbReference type="GO" id="GO:0097371">
    <property type="term" value="F:MDM2/MDM4 family protein binding"/>
    <property type="evidence" value="ECO:0007669"/>
    <property type="project" value="Ensembl"/>
</dbReference>
<dbReference type="GO" id="GO:0003723">
    <property type="term" value="F:RNA binding"/>
    <property type="evidence" value="ECO:0007669"/>
    <property type="project" value="InterPro"/>
</dbReference>
<dbReference type="GO" id="GO:0003735">
    <property type="term" value="F:structural constituent of ribosome"/>
    <property type="evidence" value="ECO:0000318"/>
    <property type="project" value="GO_Central"/>
</dbReference>
<dbReference type="GO" id="GO:1990948">
    <property type="term" value="F:ubiquitin ligase inhibitor activity"/>
    <property type="evidence" value="ECO:0007669"/>
    <property type="project" value="Ensembl"/>
</dbReference>
<dbReference type="GO" id="GO:1901798">
    <property type="term" value="P:positive regulation of signal transduction by p53 class mediator"/>
    <property type="evidence" value="ECO:0007669"/>
    <property type="project" value="Ensembl"/>
</dbReference>
<dbReference type="GO" id="GO:0000028">
    <property type="term" value="P:ribosomal small subunit assembly"/>
    <property type="evidence" value="ECO:0000318"/>
    <property type="project" value="GO_Central"/>
</dbReference>
<dbReference type="GO" id="GO:0000056">
    <property type="term" value="P:ribosomal small subunit export from nucleus"/>
    <property type="evidence" value="ECO:0007669"/>
    <property type="project" value="Ensembl"/>
</dbReference>
<dbReference type="GO" id="GO:0006364">
    <property type="term" value="P:rRNA processing"/>
    <property type="evidence" value="ECO:0007669"/>
    <property type="project" value="Ensembl"/>
</dbReference>
<dbReference type="GO" id="GO:0006412">
    <property type="term" value="P:translation"/>
    <property type="evidence" value="ECO:0007669"/>
    <property type="project" value="InterPro"/>
</dbReference>
<dbReference type="FunFam" id="3.30.860.10:FF:000002">
    <property type="entry name" value="40S ribosomal protein S15"/>
    <property type="match status" value="1"/>
</dbReference>
<dbReference type="Gene3D" id="3.30.860.10">
    <property type="entry name" value="30s Ribosomal Protein S19, Chain A"/>
    <property type="match status" value="1"/>
</dbReference>
<dbReference type="HAMAP" id="MF_00531">
    <property type="entry name" value="Ribosomal_uS19"/>
    <property type="match status" value="1"/>
</dbReference>
<dbReference type="InterPro" id="IPR002222">
    <property type="entry name" value="Ribosomal_uS19"/>
</dbReference>
<dbReference type="InterPro" id="IPR020934">
    <property type="entry name" value="Ribosomal_uS19_CS"/>
</dbReference>
<dbReference type="InterPro" id="IPR005713">
    <property type="entry name" value="Ribosomal_uS19_euk/arc"/>
</dbReference>
<dbReference type="InterPro" id="IPR023575">
    <property type="entry name" value="Ribosomal_uS19_SF"/>
</dbReference>
<dbReference type="NCBIfam" id="NF003121">
    <property type="entry name" value="PRK04038.1"/>
    <property type="match status" value="1"/>
</dbReference>
<dbReference type="NCBIfam" id="TIGR01025">
    <property type="entry name" value="uS19_arch"/>
    <property type="match status" value="1"/>
</dbReference>
<dbReference type="PANTHER" id="PTHR11880">
    <property type="entry name" value="RIBOSOMAL PROTEIN S19P FAMILY MEMBER"/>
    <property type="match status" value="1"/>
</dbReference>
<dbReference type="PANTHER" id="PTHR11880:SF2">
    <property type="entry name" value="SMALL RIBOSOMAL SUBUNIT PROTEIN US19"/>
    <property type="match status" value="1"/>
</dbReference>
<dbReference type="Pfam" id="PF00203">
    <property type="entry name" value="Ribosomal_S19"/>
    <property type="match status" value="1"/>
</dbReference>
<dbReference type="PIRSF" id="PIRSF002144">
    <property type="entry name" value="Ribosomal_S19"/>
    <property type="match status" value="1"/>
</dbReference>
<dbReference type="PRINTS" id="PR00975">
    <property type="entry name" value="RIBOSOMALS19"/>
</dbReference>
<dbReference type="SUPFAM" id="SSF54570">
    <property type="entry name" value="Ribosomal protein S19"/>
    <property type="match status" value="1"/>
</dbReference>
<dbReference type="PROSITE" id="PS00323">
    <property type="entry name" value="RIBOSOMAL_S19"/>
    <property type="match status" value="1"/>
</dbReference>
<organism>
    <name type="scientific">Bos taurus</name>
    <name type="common">Bovine</name>
    <dbReference type="NCBI Taxonomy" id="9913"/>
    <lineage>
        <taxon>Eukaryota</taxon>
        <taxon>Metazoa</taxon>
        <taxon>Chordata</taxon>
        <taxon>Craniata</taxon>
        <taxon>Vertebrata</taxon>
        <taxon>Euteleostomi</taxon>
        <taxon>Mammalia</taxon>
        <taxon>Eutheria</taxon>
        <taxon>Laurasiatheria</taxon>
        <taxon>Artiodactyla</taxon>
        <taxon>Ruminantia</taxon>
        <taxon>Pecora</taxon>
        <taxon>Bovidae</taxon>
        <taxon>Bovinae</taxon>
        <taxon>Bos</taxon>
    </lineage>
</organism>
<gene>
    <name type="primary">RPS15</name>
</gene>
<sequence>MAEVEQKKKRTFRKFTYRGVDLDQLLDMSYEQLMQLYSARQRRRLNRGLRRKQHSLLKRLRKAKKDAPPMEKPEVVKTHLRDMIILPEMVGSMVGVYNGKTFNQVEIKPEMIGHYLGEFSITYKPVKHGRPGIGATHSSRFIPLK</sequence>
<reference key="1">
    <citation type="submission" date="2005-01" db="EMBL/GenBank/DDBJ databases">
        <title>Analysis of sequences obtained from constructed full-length bovine cDNA libraries.</title>
        <authorList>
            <person name="Yu J."/>
            <person name="Meng Y."/>
            <person name="Wang Z."/>
            <person name="Hansen C."/>
            <person name="Li C."/>
            <person name="Moore S.S."/>
        </authorList>
    </citation>
    <scope>NUCLEOTIDE SEQUENCE [LARGE SCALE MRNA]</scope>
    <source>
        <tissue>Lymphoid epithelium</tissue>
    </source>
</reference>
<reference key="2">
    <citation type="submission" date="2005-08" db="EMBL/GenBank/DDBJ databases">
        <authorList>
            <consortium name="NIH - Mammalian Gene Collection (MGC) project"/>
        </authorList>
    </citation>
    <scope>NUCLEOTIDE SEQUENCE [LARGE SCALE MRNA]</scope>
    <source>
        <strain>Crossbred X Angus</strain>
        <tissue>Ileum</tissue>
    </source>
</reference>
<feature type="initiator methionine" description="Removed" evidence="1">
    <location>
        <position position="1"/>
    </location>
</feature>
<feature type="chain" id="PRO_0000130026" description="Small ribosomal subunit protein uS19">
    <location>
        <begin position="2"/>
        <end position="145"/>
    </location>
</feature>
<feature type="modified residue" description="N-acetylalanine" evidence="1">
    <location>
        <position position="2"/>
    </location>
</feature>
<feature type="cross-link" description="Glycyl lysine isopeptide (Lys-Gly) (interchain with G-Cter in SUMO2)" evidence="1">
    <location>
        <position position="108"/>
    </location>
</feature>
<accession>Q56K10</accession>
<accession>Q3T188</accession>
<comment type="function">
    <text evidence="1">Component of the small ribosomal subunit. The ribosome is a large ribonucleoprotein complex responsible for the synthesis of proteins in the cell.</text>
</comment>
<comment type="subunit">
    <text evidence="1">Component of the small ribosomal subunit.</text>
</comment>
<comment type="subcellular location">
    <subcellularLocation>
        <location evidence="1">Cytoplasm</location>
    </subcellularLocation>
</comment>
<comment type="similarity">
    <text evidence="2">Belongs to the universal ribosomal protein uS19 family.</text>
</comment>
<evidence type="ECO:0000250" key="1">
    <source>
        <dbReference type="UniProtKB" id="P62841"/>
    </source>
</evidence>
<evidence type="ECO:0000305" key="2"/>